<gene>
    <name evidence="1" type="primary">accA</name>
    <name type="ordered locus">PFLU_1286</name>
</gene>
<sequence>MNPNFLDFEQPIADLQAKIEELRLVGNDNSLNIGDEIARLQDKSSTLTEDIFGKLTSWQIARLARHPRRPYTLDYIQHIFTEFDELHGDRHFSDDAAIVGGIARLDDQPVMVIGHQKGREVREKVRRNFGMPRPEGYRKACRLMEMAERFKMPILTFIDTPGAYPGIDAEERNQSEAIAWNLRVMSRLKTPIIATVIGEGGSGGALAIGVCDQLNMLQYSTYAVISPEGCASILWKTAEKAPDAAEAMGITADRLKGLGIVDKVIAEPLGGAHRDPAAAAATIRGELASQLAMLKKLDNEALLARRYERLMSYGL</sequence>
<accession>C3K6H2</accession>
<keyword id="KW-0067">ATP-binding</keyword>
<keyword id="KW-0963">Cytoplasm</keyword>
<keyword id="KW-0275">Fatty acid biosynthesis</keyword>
<keyword id="KW-0276">Fatty acid metabolism</keyword>
<keyword id="KW-0444">Lipid biosynthesis</keyword>
<keyword id="KW-0443">Lipid metabolism</keyword>
<keyword id="KW-0547">Nucleotide-binding</keyword>
<keyword id="KW-0808">Transferase</keyword>
<evidence type="ECO:0000255" key="1">
    <source>
        <dbReference type="HAMAP-Rule" id="MF_00823"/>
    </source>
</evidence>
<evidence type="ECO:0000255" key="2">
    <source>
        <dbReference type="PROSITE-ProRule" id="PRU01137"/>
    </source>
</evidence>
<reference key="1">
    <citation type="journal article" date="2009" name="Genome Biol.">
        <title>Genomic and genetic analyses of diversity and plant interactions of Pseudomonas fluorescens.</title>
        <authorList>
            <person name="Silby M.W."/>
            <person name="Cerdeno-Tarraga A.M."/>
            <person name="Vernikos G.S."/>
            <person name="Giddens S.R."/>
            <person name="Jackson R.W."/>
            <person name="Preston G.M."/>
            <person name="Zhang X.-X."/>
            <person name="Moon C.D."/>
            <person name="Gehrig S.M."/>
            <person name="Godfrey S.A.C."/>
            <person name="Knight C.G."/>
            <person name="Malone J.G."/>
            <person name="Robinson Z."/>
            <person name="Spiers A.J."/>
            <person name="Harris S."/>
            <person name="Challis G.L."/>
            <person name="Yaxley A.M."/>
            <person name="Harris D."/>
            <person name="Seeger K."/>
            <person name="Murphy L."/>
            <person name="Rutter S."/>
            <person name="Squares R."/>
            <person name="Quail M.A."/>
            <person name="Saunders E."/>
            <person name="Mavromatis K."/>
            <person name="Brettin T.S."/>
            <person name="Bentley S.D."/>
            <person name="Hothersall J."/>
            <person name="Stephens E."/>
            <person name="Thomas C.M."/>
            <person name="Parkhill J."/>
            <person name="Levy S.B."/>
            <person name="Rainey P.B."/>
            <person name="Thomson N.R."/>
        </authorList>
    </citation>
    <scope>NUCLEOTIDE SEQUENCE [LARGE SCALE GENOMIC DNA]</scope>
    <source>
        <strain>SBW25</strain>
    </source>
</reference>
<organism>
    <name type="scientific">Pseudomonas fluorescens (strain SBW25)</name>
    <dbReference type="NCBI Taxonomy" id="216595"/>
    <lineage>
        <taxon>Bacteria</taxon>
        <taxon>Pseudomonadati</taxon>
        <taxon>Pseudomonadota</taxon>
        <taxon>Gammaproteobacteria</taxon>
        <taxon>Pseudomonadales</taxon>
        <taxon>Pseudomonadaceae</taxon>
        <taxon>Pseudomonas</taxon>
    </lineage>
</organism>
<proteinExistence type="inferred from homology"/>
<comment type="function">
    <text evidence="1">Component of the acetyl coenzyme A carboxylase (ACC) complex. First, biotin carboxylase catalyzes the carboxylation of biotin on its carrier protein (BCCP) and then the CO(2) group is transferred by the carboxyltransferase to acetyl-CoA to form malonyl-CoA.</text>
</comment>
<comment type="catalytic activity">
    <reaction evidence="1">
        <text>N(6)-carboxybiotinyl-L-lysyl-[protein] + acetyl-CoA = N(6)-biotinyl-L-lysyl-[protein] + malonyl-CoA</text>
        <dbReference type="Rhea" id="RHEA:54728"/>
        <dbReference type="Rhea" id="RHEA-COMP:10505"/>
        <dbReference type="Rhea" id="RHEA-COMP:10506"/>
        <dbReference type="ChEBI" id="CHEBI:57288"/>
        <dbReference type="ChEBI" id="CHEBI:57384"/>
        <dbReference type="ChEBI" id="CHEBI:83144"/>
        <dbReference type="ChEBI" id="CHEBI:83145"/>
        <dbReference type="EC" id="2.1.3.15"/>
    </reaction>
</comment>
<comment type="pathway">
    <text evidence="1">Lipid metabolism; malonyl-CoA biosynthesis; malonyl-CoA from acetyl-CoA: step 1/1.</text>
</comment>
<comment type="subunit">
    <text evidence="1">Acetyl-CoA carboxylase is a heterohexamer composed of biotin carboxyl carrier protein (AccB), biotin carboxylase (AccC) and two subunits each of ACCase subunit alpha (AccA) and ACCase subunit beta (AccD).</text>
</comment>
<comment type="subcellular location">
    <subcellularLocation>
        <location evidence="1">Cytoplasm</location>
    </subcellularLocation>
</comment>
<comment type="similarity">
    <text evidence="1">Belongs to the AccA family.</text>
</comment>
<protein>
    <recommendedName>
        <fullName evidence="1">Acetyl-coenzyme A carboxylase carboxyl transferase subunit alpha</fullName>
        <shortName evidence="1">ACCase subunit alpha</shortName>
        <shortName evidence="1">Acetyl-CoA carboxylase carboxyltransferase subunit alpha</shortName>
        <ecNumber evidence="1">2.1.3.15</ecNumber>
    </recommendedName>
</protein>
<name>ACCA_PSEFS</name>
<feature type="chain" id="PRO_1000213130" description="Acetyl-coenzyme A carboxylase carboxyl transferase subunit alpha">
    <location>
        <begin position="1"/>
        <end position="315"/>
    </location>
</feature>
<feature type="domain" description="CoA carboxyltransferase C-terminal" evidence="2">
    <location>
        <begin position="39"/>
        <end position="293"/>
    </location>
</feature>
<dbReference type="EC" id="2.1.3.15" evidence="1"/>
<dbReference type="EMBL" id="AM181176">
    <property type="protein sequence ID" value="CAY47543.1"/>
    <property type="molecule type" value="Genomic_DNA"/>
</dbReference>
<dbReference type="RefSeq" id="WP_012722607.1">
    <property type="nucleotide sequence ID" value="NC_012660.1"/>
</dbReference>
<dbReference type="SMR" id="C3K6H2"/>
<dbReference type="STRING" id="294.SRM1_01145"/>
<dbReference type="eggNOG" id="COG0825">
    <property type="taxonomic scope" value="Bacteria"/>
</dbReference>
<dbReference type="HOGENOM" id="CLU_015486_0_2_6"/>
<dbReference type="OrthoDB" id="9808023at2"/>
<dbReference type="UniPathway" id="UPA00655">
    <property type="reaction ID" value="UER00711"/>
</dbReference>
<dbReference type="GO" id="GO:0009317">
    <property type="term" value="C:acetyl-CoA carboxylase complex"/>
    <property type="evidence" value="ECO:0007669"/>
    <property type="project" value="InterPro"/>
</dbReference>
<dbReference type="GO" id="GO:0003989">
    <property type="term" value="F:acetyl-CoA carboxylase activity"/>
    <property type="evidence" value="ECO:0007669"/>
    <property type="project" value="InterPro"/>
</dbReference>
<dbReference type="GO" id="GO:0005524">
    <property type="term" value="F:ATP binding"/>
    <property type="evidence" value="ECO:0007669"/>
    <property type="project" value="UniProtKB-KW"/>
</dbReference>
<dbReference type="GO" id="GO:0016743">
    <property type="term" value="F:carboxyl- or carbamoyltransferase activity"/>
    <property type="evidence" value="ECO:0007669"/>
    <property type="project" value="UniProtKB-UniRule"/>
</dbReference>
<dbReference type="GO" id="GO:0006633">
    <property type="term" value="P:fatty acid biosynthetic process"/>
    <property type="evidence" value="ECO:0007669"/>
    <property type="project" value="UniProtKB-KW"/>
</dbReference>
<dbReference type="GO" id="GO:2001295">
    <property type="term" value="P:malonyl-CoA biosynthetic process"/>
    <property type="evidence" value="ECO:0007669"/>
    <property type="project" value="UniProtKB-UniRule"/>
</dbReference>
<dbReference type="FunFam" id="3.90.226.10:FF:000008">
    <property type="entry name" value="Acetyl-coenzyme A carboxylase carboxyl transferase subunit alpha"/>
    <property type="match status" value="1"/>
</dbReference>
<dbReference type="Gene3D" id="3.90.226.10">
    <property type="entry name" value="2-enoyl-CoA Hydratase, Chain A, domain 1"/>
    <property type="match status" value="1"/>
</dbReference>
<dbReference type="HAMAP" id="MF_00823">
    <property type="entry name" value="AcetylCoA_CT_alpha"/>
    <property type="match status" value="1"/>
</dbReference>
<dbReference type="InterPro" id="IPR001095">
    <property type="entry name" value="Acetyl_CoA_COase_a_su"/>
</dbReference>
<dbReference type="InterPro" id="IPR029045">
    <property type="entry name" value="ClpP/crotonase-like_dom_sf"/>
</dbReference>
<dbReference type="InterPro" id="IPR011763">
    <property type="entry name" value="COA_CT_C"/>
</dbReference>
<dbReference type="NCBIfam" id="TIGR00513">
    <property type="entry name" value="accA"/>
    <property type="match status" value="1"/>
</dbReference>
<dbReference type="NCBIfam" id="NF041504">
    <property type="entry name" value="AccA_sub"/>
    <property type="match status" value="1"/>
</dbReference>
<dbReference type="NCBIfam" id="NF004344">
    <property type="entry name" value="PRK05724.1"/>
    <property type="match status" value="1"/>
</dbReference>
<dbReference type="PANTHER" id="PTHR42853">
    <property type="entry name" value="ACETYL-COENZYME A CARBOXYLASE CARBOXYL TRANSFERASE SUBUNIT ALPHA"/>
    <property type="match status" value="1"/>
</dbReference>
<dbReference type="PANTHER" id="PTHR42853:SF3">
    <property type="entry name" value="ACETYL-COENZYME A CARBOXYLASE CARBOXYL TRANSFERASE SUBUNIT ALPHA, CHLOROPLASTIC"/>
    <property type="match status" value="1"/>
</dbReference>
<dbReference type="Pfam" id="PF03255">
    <property type="entry name" value="ACCA"/>
    <property type="match status" value="1"/>
</dbReference>
<dbReference type="PRINTS" id="PR01069">
    <property type="entry name" value="ACCCTRFRASEA"/>
</dbReference>
<dbReference type="SUPFAM" id="SSF52096">
    <property type="entry name" value="ClpP/crotonase"/>
    <property type="match status" value="1"/>
</dbReference>
<dbReference type="PROSITE" id="PS50989">
    <property type="entry name" value="COA_CT_CTER"/>
    <property type="match status" value="1"/>
</dbReference>